<name>HEM2_PONAB</name>
<protein>
    <recommendedName>
        <fullName>Delta-aminolevulinic acid dehydratase</fullName>
        <shortName>ALADH</shortName>
        <ecNumber>4.2.1.24</ecNumber>
    </recommendedName>
    <alternativeName>
        <fullName>Porphobilinogen synthase</fullName>
    </alternativeName>
</protein>
<reference key="1">
    <citation type="submission" date="2004-11" db="EMBL/GenBank/DDBJ databases">
        <authorList>
            <consortium name="The German cDNA consortium"/>
        </authorList>
    </citation>
    <scope>NUCLEOTIDE SEQUENCE [LARGE SCALE MRNA]</scope>
    <source>
        <tissue>Brain cortex</tissue>
    </source>
</reference>
<accession>Q5R971</accession>
<proteinExistence type="evidence at transcript level"/>
<keyword id="KW-0021">Allosteric enzyme</keyword>
<keyword id="KW-0963">Cytoplasm</keyword>
<keyword id="KW-0350">Heme biosynthesis</keyword>
<keyword id="KW-0456">Lyase</keyword>
<keyword id="KW-0479">Metal-binding</keyword>
<keyword id="KW-0597">Phosphoprotein</keyword>
<keyword id="KW-0627">Porphyrin biosynthesis</keyword>
<keyword id="KW-1185">Reference proteome</keyword>
<keyword id="KW-0862">Zinc</keyword>
<organism>
    <name type="scientific">Pongo abelii</name>
    <name type="common">Sumatran orangutan</name>
    <name type="synonym">Pongo pygmaeus abelii</name>
    <dbReference type="NCBI Taxonomy" id="9601"/>
    <lineage>
        <taxon>Eukaryota</taxon>
        <taxon>Metazoa</taxon>
        <taxon>Chordata</taxon>
        <taxon>Craniata</taxon>
        <taxon>Vertebrata</taxon>
        <taxon>Euteleostomi</taxon>
        <taxon>Mammalia</taxon>
        <taxon>Eutheria</taxon>
        <taxon>Euarchontoglires</taxon>
        <taxon>Primates</taxon>
        <taxon>Haplorrhini</taxon>
        <taxon>Catarrhini</taxon>
        <taxon>Hominidae</taxon>
        <taxon>Pongo</taxon>
    </lineage>
</organism>
<gene>
    <name type="primary">ALAD</name>
</gene>
<evidence type="ECO:0000250" key="1">
    <source>
        <dbReference type="UniProtKB" id="P10518"/>
    </source>
</evidence>
<evidence type="ECO:0000250" key="2">
    <source>
        <dbReference type="UniProtKB" id="P13716"/>
    </source>
</evidence>
<evidence type="ECO:0000305" key="3"/>
<sequence length="330" mass="36200">MQPQSVLHSGYFHPLLRAWQTATTTLNASNLIYPIFVTDVPDDIQPIASLPGVARYGVNRLEEMLRPLVEEGLRCVLIFGVPSRVPKDERGSAADSEESPAIEAIHLLRKTFPNLLVACDVCLCPYTSHGHCGLLSENGAFQAEESRQRLAEVALAYAKAGCQVVAPSDMMDGRVEAIKETLMAHGLGSRVSVMSYSAKFASCFYGPFRDAAKSSPAFGDRRCYQLPPGARGLALRAVDRDVREGADMLMVKPGMPYLDIVREVKDKHPDLPLAVYHVSGEFAMLWHGAQAGAFDLKAAVLEAMTAFRRAGADIIITHYTPQLLQWLKEE</sequence>
<comment type="function">
    <text evidence="2">Catalyzes an early step in the biosynthesis of tetrapyrroles. Binds two molecules of 5-aminolevulinate per subunit, each at a distinct site, and catalyzes their condensation to form porphobilinogen.</text>
</comment>
<comment type="catalytic activity">
    <reaction evidence="2">
        <text>2 5-aminolevulinate = porphobilinogen + 2 H2O + H(+)</text>
        <dbReference type="Rhea" id="RHEA:24064"/>
        <dbReference type="ChEBI" id="CHEBI:15377"/>
        <dbReference type="ChEBI" id="CHEBI:15378"/>
        <dbReference type="ChEBI" id="CHEBI:58126"/>
        <dbReference type="ChEBI" id="CHEBI:356416"/>
        <dbReference type="EC" id="4.2.1.24"/>
    </reaction>
</comment>
<comment type="cofactor">
    <cofactor evidence="2">
        <name>Zn(2+)</name>
        <dbReference type="ChEBI" id="CHEBI:29105"/>
    </cofactor>
    <text evidence="2">Binds 8 zinc ions per octamer. Requires four zinc ions per octamer for full catalytic activity. Can bind up to 2 zinc ions per subunit.</text>
</comment>
<comment type="activity regulation">
    <text evidence="2">Can alternate between a fully active homooctamer and a low-activity homohexamer. A bound magnesium ion may promote the assembly of the fully active homooctamer. The magnesium-binding site is absent in the low-activity homohexamer. Inhibited by compounds that favor the hexameric state. Inhibited by divalent lead ions. The lead ions partially displace the zinc cofactor.</text>
</comment>
<comment type="pathway">
    <text evidence="2">Porphyrin-containing compound metabolism; protoporphyrin-IX biosynthesis; coproporphyrinogen-III from 5-aminolevulinate: step 1/4.</text>
</comment>
<comment type="subunit">
    <text evidence="2">Homooctamer; active form. Homohexamer; low activity form.</text>
</comment>
<comment type="subcellular location">
    <subcellularLocation>
        <location evidence="1">Cytoplasm</location>
        <location evidence="1">Cytosol</location>
    </subcellularLocation>
</comment>
<comment type="similarity">
    <text evidence="3">Belongs to the ALAD family.</text>
</comment>
<comment type="sequence caution" evidence="3">
    <conflict type="erroneous initiation">
        <sequence resource="EMBL-CDS" id="CAH91689"/>
    </conflict>
</comment>
<feature type="chain" id="PRO_0000140529" description="Delta-aminolevulinic acid dehydratase">
    <location>
        <begin position="1"/>
        <end position="330"/>
    </location>
</feature>
<feature type="active site" description="Schiff-base intermediate with substrate" evidence="2">
    <location>
        <position position="199"/>
    </location>
</feature>
<feature type="active site" description="Schiff-base intermediate with substrate" evidence="2">
    <location>
        <position position="252"/>
    </location>
</feature>
<feature type="binding site" evidence="2">
    <location>
        <position position="122"/>
    </location>
    <ligand>
        <name>Zn(2+)</name>
        <dbReference type="ChEBI" id="CHEBI:29105"/>
        <label>1</label>
        <note>catalytic</note>
    </ligand>
</feature>
<feature type="binding site" evidence="2">
    <location>
        <position position="124"/>
    </location>
    <ligand>
        <name>Zn(2+)</name>
        <dbReference type="ChEBI" id="CHEBI:29105"/>
        <label>1</label>
        <note>catalytic</note>
    </ligand>
</feature>
<feature type="binding site" evidence="2">
    <location>
        <position position="131"/>
    </location>
    <ligand>
        <name>Zn(2+)</name>
        <dbReference type="ChEBI" id="CHEBI:29105"/>
        <label>2</label>
    </ligand>
</feature>
<feature type="binding site" evidence="2">
    <location>
        <position position="132"/>
    </location>
    <ligand>
        <name>Zn(2+)</name>
        <dbReference type="ChEBI" id="CHEBI:29105"/>
        <label>1</label>
        <note>catalytic</note>
    </ligand>
</feature>
<feature type="binding site" evidence="2">
    <location>
        <position position="209"/>
    </location>
    <ligand>
        <name>5-aminolevulinate</name>
        <dbReference type="ChEBI" id="CHEBI:356416"/>
        <label>1</label>
    </ligand>
</feature>
<feature type="binding site" evidence="2">
    <location>
        <position position="221"/>
    </location>
    <ligand>
        <name>5-aminolevulinate</name>
        <dbReference type="ChEBI" id="CHEBI:356416"/>
        <label>1</label>
    </ligand>
</feature>
<feature type="binding site" evidence="2">
    <location>
        <position position="223"/>
    </location>
    <ligand>
        <name>Zn(2+)</name>
        <dbReference type="ChEBI" id="CHEBI:29105"/>
        <label>2</label>
    </ligand>
</feature>
<feature type="binding site" evidence="2">
    <location>
        <position position="279"/>
    </location>
    <ligand>
        <name>5-aminolevulinate</name>
        <dbReference type="ChEBI" id="CHEBI:356416"/>
        <label>2</label>
    </ligand>
</feature>
<feature type="modified residue" description="N6-succinyllysine" evidence="1">
    <location>
        <position position="199"/>
    </location>
</feature>
<feature type="modified residue" description="Phosphoserine" evidence="1">
    <location>
        <position position="215"/>
    </location>
</feature>
<feature type="modified residue" description="N6-succinyllysine" evidence="1">
    <location>
        <position position="252"/>
    </location>
</feature>
<dbReference type="EC" id="4.2.1.24"/>
<dbReference type="EMBL" id="CR859521">
    <property type="protein sequence ID" value="CAH91689.1"/>
    <property type="status" value="ALT_INIT"/>
    <property type="molecule type" value="mRNA"/>
</dbReference>
<dbReference type="RefSeq" id="NP_001127135.2">
    <property type="nucleotide sequence ID" value="NM_001133663.2"/>
</dbReference>
<dbReference type="SMR" id="Q5R971"/>
<dbReference type="FunCoup" id="Q5R971">
    <property type="interactions" value="1312"/>
</dbReference>
<dbReference type="STRING" id="9601.ENSPPYP00000021874"/>
<dbReference type="GeneID" id="100174182"/>
<dbReference type="KEGG" id="pon:100174182"/>
<dbReference type="CTD" id="210"/>
<dbReference type="eggNOG" id="KOG2794">
    <property type="taxonomic scope" value="Eukaryota"/>
</dbReference>
<dbReference type="InParanoid" id="Q5R971"/>
<dbReference type="OrthoDB" id="1530at2759"/>
<dbReference type="UniPathway" id="UPA00251">
    <property type="reaction ID" value="UER00318"/>
</dbReference>
<dbReference type="Proteomes" id="UP000001595">
    <property type="component" value="Unplaced"/>
</dbReference>
<dbReference type="GO" id="GO:0005829">
    <property type="term" value="C:cytosol"/>
    <property type="evidence" value="ECO:0007669"/>
    <property type="project" value="UniProtKB-SubCell"/>
</dbReference>
<dbReference type="GO" id="GO:0004655">
    <property type="term" value="F:porphobilinogen synthase activity"/>
    <property type="evidence" value="ECO:0000250"/>
    <property type="project" value="UniProtKB"/>
</dbReference>
<dbReference type="GO" id="GO:0008270">
    <property type="term" value="F:zinc ion binding"/>
    <property type="evidence" value="ECO:0000250"/>
    <property type="project" value="UniProtKB"/>
</dbReference>
<dbReference type="GO" id="GO:0006783">
    <property type="term" value="P:heme biosynthetic process"/>
    <property type="evidence" value="ECO:0000250"/>
    <property type="project" value="UniProtKB"/>
</dbReference>
<dbReference type="GO" id="GO:0006782">
    <property type="term" value="P:protoporphyrinogen IX biosynthetic process"/>
    <property type="evidence" value="ECO:0007669"/>
    <property type="project" value="UniProtKB-UniPathway"/>
</dbReference>
<dbReference type="CDD" id="cd04824">
    <property type="entry name" value="eu_ALAD_PBGS_cysteine_rich"/>
    <property type="match status" value="1"/>
</dbReference>
<dbReference type="FunFam" id="3.20.20.70:FF:000048">
    <property type="entry name" value="Delta-aminolevulinic acid dehydratase"/>
    <property type="match status" value="1"/>
</dbReference>
<dbReference type="Gene3D" id="3.20.20.70">
    <property type="entry name" value="Aldolase class I"/>
    <property type="match status" value="1"/>
</dbReference>
<dbReference type="InterPro" id="IPR001731">
    <property type="entry name" value="ALAD"/>
</dbReference>
<dbReference type="InterPro" id="IPR030656">
    <property type="entry name" value="ALAD_AS"/>
</dbReference>
<dbReference type="InterPro" id="IPR013785">
    <property type="entry name" value="Aldolase_TIM"/>
</dbReference>
<dbReference type="NCBIfam" id="NF006762">
    <property type="entry name" value="PRK09283.1"/>
    <property type="match status" value="1"/>
</dbReference>
<dbReference type="PANTHER" id="PTHR11458">
    <property type="entry name" value="DELTA-AMINOLEVULINIC ACID DEHYDRATASE"/>
    <property type="match status" value="1"/>
</dbReference>
<dbReference type="PANTHER" id="PTHR11458:SF0">
    <property type="entry name" value="DELTA-AMINOLEVULINIC ACID DEHYDRATASE"/>
    <property type="match status" value="1"/>
</dbReference>
<dbReference type="Pfam" id="PF00490">
    <property type="entry name" value="ALAD"/>
    <property type="match status" value="1"/>
</dbReference>
<dbReference type="PIRSF" id="PIRSF001415">
    <property type="entry name" value="Porphbilin_synth"/>
    <property type="match status" value="1"/>
</dbReference>
<dbReference type="PRINTS" id="PR00144">
    <property type="entry name" value="DALDHYDRTASE"/>
</dbReference>
<dbReference type="SMART" id="SM01004">
    <property type="entry name" value="ALAD"/>
    <property type="match status" value="1"/>
</dbReference>
<dbReference type="SUPFAM" id="SSF51569">
    <property type="entry name" value="Aldolase"/>
    <property type="match status" value="1"/>
</dbReference>
<dbReference type="PROSITE" id="PS00169">
    <property type="entry name" value="D_ALA_DEHYDRATASE"/>
    <property type="match status" value="1"/>
</dbReference>